<gene>
    <name type="primary">hopAB3</name>
    <name type="synonym">hopPmaL</name>
</gene>
<name>HPAB3_PSEYM</name>
<proteinExistence type="evidence at protein level"/>
<evidence type="ECO:0000250" key="1"/>
<evidence type="ECO:0000256" key="2">
    <source>
        <dbReference type="SAM" id="MobiDB-lite"/>
    </source>
</evidence>
<evidence type="ECO:0000269" key="3">
    <source>
    </source>
</evidence>
<evidence type="ECO:0000305" key="4"/>
<evidence type="ECO:0007829" key="5">
    <source>
        <dbReference type="PDB" id="2LF3"/>
    </source>
</evidence>
<evidence type="ECO:0007829" key="6">
    <source>
        <dbReference type="PDB" id="3TJY"/>
    </source>
</evidence>
<sequence>MVGISGRAGPSGSYNYSGHTDNPEPVSGRARDSNSEANSSNSPQVPPPLNAPASPMPAGRPRFLRSMALSSQTREWLEKGMPTEAEAGVPIRLQERAANTAPQARAEERHTQPADAAAPHARAERGRTLQAPASTSPLYTGAVPRANRIVQQLVEAGADLANIRTMFRNMLRGEEMILSRAEQNVFLQHFPDMLPCGIDRNSELAIALREALRRADSQQAARAPARTPPRSSVRTPERSPAPRTATESSSGSNQRSLLGRFAGLMTSNQRRPSSASNASTSQRPVDRNPPRINLMPTGANRVAMRNRGNNEADAALQALAQNGINMEDLRAALEAYIVWLRPIPLDIANALEGVGITPRFDNPEEAKVDNPLMNLSSALKRRLDA</sequence>
<protein>
    <recommendedName>
        <fullName>Effector protein hopAB3</fullName>
    </recommendedName>
    <alternativeName>
        <fullName>Avirulence protein hopPmaL</fullName>
    </alternativeName>
</protein>
<keyword id="KW-0002">3D-structure</keyword>
<keyword id="KW-0928">Hypersensitive response elicitation</keyword>
<keyword id="KW-0964">Secreted</keyword>
<keyword id="KW-0843">Virulence</keyword>
<reference key="1">
    <citation type="journal article" date="2002" name="Science">
        <title>A functional screen for the type III (Hrp) secretome of the plant pathogen Pseudomonas syringae.</title>
        <authorList>
            <person name="Guttman D.S."/>
            <person name="Vinatzer B.A."/>
            <person name="Sarkar S.F."/>
            <person name="Ranall M.V."/>
            <person name="Kettler G."/>
            <person name="Greenberg J.T."/>
        </authorList>
    </citation>
    <scope>NUCLEOTIDE SEQUENCE [GENOMIC DNA]</scope>
    <source>
        <strain>ES4326</strain>
    </source>
</reference>
<reference key="2">
    <citation type="journal article" date="2006" name="Appl. Environ. Microbiol.">
        <title>Diverse AvrPtoB homologs from several Pseudomonas syringae pathovars elicit Pto-dependent resistance and have similar virulence activities.</title>
        <authorList>
            <person name="Lin N.-C."/>
            <person name="Abramovitch R.B."/>
            <person name="Kim Y.-J."/>
            <person name="Martin G.B."/>
        </authorList>
    </citation>
    <scope>FUNCTION IN VIRULENCE AND AVIRULENCE</scope>
    <scope>SUBCELLULAR LOCATION</scope>
    <source>
        <strain>ES4326</strain>
    </source>
</reference>
<comment type="function">
    <text evidence="3">Effector protein involved in gene-for-gene resistance in tomato plants. It is recognized by the host Pto resistance protein and elicits Pto and Prf-dependent hypersensitive response (HR) and programmed cell death (PCD), resulting in host immunity. In susceptible plants, promotes virulence, in part, by enhancing the development of disease symptoms and bacterial growth.</text>
</comment>
<comment type="subunit">
    <text>Interacts physically with plant cell Pto.</text>
</comment>
<comment type="subcellular location">
    <subcellularLocation>
        <location evidence="3">Secreted</location>
    </subcellularLocation>
    <text>Secreted via type III secretion system (T3SS). Localized to the plant cell cytoplasm.</text>
</comment>
<comment type="miscellaneous">
    <text>Unlike other effector proteins from the HopAB family, lacks the anti-PCD region and cannot inhibit cell death triggered by AvrPto/Pto.</text>
</comment>
<comment type="similarity">
    <text evidence="4">Belongs to the HopAB family.</text>
</comment>
<organism>
    <name type="scientific">Pseudomonas syringae pv. maculicola</name>
    <dbReference type="NCBI Taxonomy" id="59511"/>
    <lineage>
        <taxon>Bacteria</taxon>
        <taxon>Pseudomonadati</taxon>
        <taxon>Pseudomonadota</taxon>
        <taxon>Gammaproteobacteria</taxon>
        <taxon>Pseudomonadales</taxon>
        <taxon>Pseudomonadaceae</taxon>
        <taxon>Pseudomonas</taxon>
    </lineage>
</organism>
<dbReference type="EMBL" id="AF458050">
    <property type="protein sequence ID" value="AAL84252.1"/>
    <property type="molecule type" value="Genomic_DNA"/>
</dbReference>
<dbReference type="PDB" id="2LF3">
    <property type="method" value="NMR"/>
    <property type="chains" value="A=281-385"/>
</dbReference>
<dbReference type="PDB" id="3TJY">
    <property type="method" value="X-ray"/>
    <property type="resolution" value="1.70 A"/>
    <property type="chains" value="A=140-233"/>
</dbReference>
<dbReference type="PDBsum" id="2LF3"/>
<dbReference type="PDBsum" id="3TJY"/>
<dbReference type="BMRB" id="Q8RP04"/>
<dbReference type="SMR" id="Q8RP04"/>
<dbReference type="EvolutionaryTrace" id="Q8RP04"/>
<dbReference type="GO" id="GO:0005576">
    <property type="term" value="C:extracellular region"/>
    <property type="evidence" value="ECO:0007669"/>
    <property type="project" value="UniProtKB-SubCell"/>
</dbReference>
<dbReference type="GO" id="GO:0052040">
    <property type="term" value="P:symbiont-mediated perturbation of host programmed cell death"/>
    <property type="evidence" value="ECO:0007669"/>
    <property type="project" value="UniProtKB-KW"/>
</dbReference>
<dbReference type="CDD" id="cd12803">
    <property type="entry name" value="HopAB_BID"/>
    <property type="match status" value="1"/>
</dbReference>
<dbReference type="CDD" id="cd12802">
    <property type="entry name" value="HopAB_PID"/>
    <property type="match status" value="1"/>
</dbReference>
<dbReference type="Gene3D" id="1.20.1280.110">
    <property type="match status" value="1"/>
</dbReference>
<dbReference type="Gene3D" id="1.20.1280.220">
    <property type="entry name" value="Effector protein HopAB, BAK1-interacting domain"/>
    <property type="match status" value="1"/>
</dbReference>
<dbReference type="InterPro" id="IPR031759">
    <property type="entry name" value="HopAB_BAK-bd"/>
</dbReference>
<dbReference type="InterPro" id="IPR038342">
    <property type="entry name" value="HopAB_BAK-bd_sf"/>
</dbReference>
<dbReference type="InterPro" id="IPR033743">
    <property type="entry name" value="HopAB_PID"/>
</dbReference>
<dbReference type="Pfam" id="PF16847">
    <property type="entry name" value="AvrPtoB_bdg"/>
    <property type="match status" value="1"/>
</dbReference>
<accession>Q8RP04</accession>
<feature type="chain" id="PRO_0000234083" description="Effector protein hopAB3">
    <location>
        <begin position="1"/>
        <end position="385"/>
    </location>
</feature>
<feature type="region of interest" description="Host recognition" evidence="1">
    <location>
        <begin position="1"/>
        <end position="333"/>
    </location>
</feature>
<feature type="region of interest" description="Disordered" evidence="2">
    <location>
        <begin position="1"/>
        <end position="61"/>
    </location>
</feature>
<feature type="region of interest" description="Disordered" evidence="2">
    <location>
        <begin position="73"/>
        <end position="139"/>
    </location>
</feature>
<feature type="region of interest" description="Disordered" evidence="2">
    <location>
        <begin position="215"/>
        <end position="293"/>
    </location>
</feature>
<feature type="compositionally biased region" description="Low complexity" evidence="2">
    <location>
        <begin position="217"/>
        <end position="234"/>
    </location>
</feature>
<feature type="compositionally biased region" description="Polar residues" evidence="2">
    <location>
        <begin position="245"/>
        <end position="256"/>
    </location>
</feature>
<feature type="compositionally biased region" description="Polar residues" evidence="2">
    <location>
        <begin position="265"/>
        <end position="283"/>
    </location>
</feature>
<feature type="helix" evidence="6">
    <location>
        <begin position="142"/>
        <end position="155"/>
    </location>
</feature>
<feature type="helix" evidence="6">
    <location>
        <begin position="160"/>
        <end position="171"/>
    </location>
</feature>
<feature type="helix" evidence="6">
    <location>
        <begin position="180"/>
        <end position="189"/>
    </location>
</feature>
<feature type="helix" evidence="6">
    <location>
        <begin position="193"/>
        <end position="196"/>
    </location>
</feature>
<feature type="helix" evidence="6">
    <location>
        <begin position="203"/>
        <end position="216"/>
    </location>
</feature>
<feature type="helix" evidence="5">
    <location>
        <begin position="301"/>
        <end position="304"/>
    </location>
</feature>
<feature type="helix" evidence="5">
    <location>
        <begin position="309"/>
        <end position="322"/>
    </location>
</feature>
<feature type="helix" evidence="5">
    <location>
        <begin position="326"/>
        <end position="337"/>
    </location>
</feature>
<feature type="helix" evidence="5">
    <location>
        <begin position="345"/>
        <end position="353"/>
    </location>
</feature>
<feature type="turn" evidence="5">
    <location>
        <begin position="363"/>
        <end position="368"/>
    </location>
</feature>
<feature type="helix" evidence="5">
    <location>
        <begin position="371"/>
        <end position="384"/>
    </location>
</feature>